<name>RS26_NEUCR</name>
<evidence type="ECO:0000256" key="1">
    <source>
        <dbReference type="SAM" id="MobiDB-lite"/>
    </source>
</evidence>
<evidence type="ECO:0000269" key="2">
    <source>
    </source>
</evidence>
<evidence type="ECO:0000303" key="3">
    <source>
    </source>
</evidence>
<evidence type="ECO:0000305" key="4"/>
<evidence type="ECO:0000305" key="5">
    <source>
    </source>
</evidence>
<protein>
    <recommendedName>
        <fullName evidence="3">Small ribosomal subunit protein eS26</fullName>
    </recommendedName>
    <alternativeName>
        <fullName>13.6 kDa ribosomal protein</fullName>
    </alternativeName>
    <alternativeName>
        <fullName>40S ribosomal protein S26E</fullName>
    </alternativeName>
    <alternativeName>
        <fullName>CRP5</fullName>
    </alternativeName>
</protein>
<accession>P21772</accession>
<accession>Q7RWD9</accession>
<proteinExistence type="evidence at protein level"/>
<sequence>MVKKRKNNGRNKKGRGHVKPIRCSNCSRCTPKDKAIKRFTIRNMVESAAIRDISDASVFAEYTVPKMYLKLQYCVSCAIHGKIVRVRSREGRRNRAPPPRVRYNKDGKKVTPTQGAKTA</sequence>
<reference key="1">
    <citation type="journal article" date="1990" name="Nucleic Acids Res.">
        <title>Nucleotide sequence of a Neurospora crassa ribosomal protein gene.</title>
        <authorList>
            <person name="Tarawneh K.A."/>
            <person name="Wang Z."/>
            <person name="Free S.J."/>
        </authorList>
    </citation>
    <scope>NUCLEOTIDE SEQUENCE [MRNA]</scope>
    <source>
        <strain>ATCC 24698 / 74-OR23-1A / CBS 708.71 / DSM 1257 / FGSC 987</strain>
    </source>
</reference>
<reference key="2">
    <citation type="journal article" date="2003" name="Nature">
        <title>The genome sequence of the filamentous fungus Neurospora crassa.</title>
        <authorList>
            <person name="Galagan J.E."/>
            <person name="Calvo S.E."/>
            <person name="Borkovich K.A."/>
            <person name="Selker E.U."/>
            <person name="Read N.D."/>
            <person name="Jaffe D.B."/>
            <person name="FitzHugh W."/>
            <person name="Ma L.-J."/>
            <person name="Smirnov S."/>
            <person name="Purcell S."/>
            <person name="Rehman B."/>
            <person name="Elkins T."/>
            <person name="Engels R."/>
            <person name="Wang S."/>
            <person name="Nielsen C.B."/>
            <person name="Butler J."/>
            <person name="Endrizzi M."/>
            <person name="Qui D."/>
            <person name="Ianakiev P."/>
            <person name="Bell-Pedersen D."/>
            <person name="Nelson M.A."/>
            <person name="Werner-Washburne M."/>
            <person name="Selitrennikoff C.P."/>
            <person name="Kinsey J.A."/>
            <person name="Braun E.L."/>
            <person name="Zelter A."/>
            <person name="Schulte U."/>
            <person name="Kothe G.O."/>
            <person name="Jedd G."/>
            <person name="Mewes H.-W."/>
            <person name="Staben C."/>
            <person name="Marcotte E."/>
            <person name="Greenberg D."/>
            <person name="Roy A."/>
            <person name="Foley K."/>
            <person name="Naylor J."/>
            <person name="Stange-Thomann N."/>
            <person name="Barrett R."/>
            <person name="Gnerre S."/>
            <person name="Kamal M."/>
            <person name="Kamvysselis M."/>
            <person name="Mauceli E.W."/>
            <person name="Bielke C."/>
            <person name="Rudd S."/>
            <person name="Frishman D."/>
            <person name="Krystofova S."/>
            <person name="Rasmussen C."/>
            <person name="Metzenberg R.L."/>
            <person name="Perkins D.D."/>
            <person name="Kroken S."/>
            <person name="Cogoni C."/>
            <person name="Macino G."/>
            <person name="Catcheside D.E.A."/>
            <person name="Li W."/>
            <person name="Pratt R.J."/>
            <person name="Osmani S.A."/>
            <person name="DeSouza C.P.C."/>
            <person name="Glass N.L."/>
            <person name="Orbach M.J."/>
            <person name="Berglund J.A."/>
            <person name="Voelker R."/>
            <person name="Yarden O."/>
            <person name="Plamann M."/>
            <person name="Seiler S."/>
            <person name="Dunlap J.C."/>
            <person name="Radford A."/>
            <person name="Aramayo R."/>
            <person name="Natvig D.O."/>
            <person name="Alex L.A."/>
            <person name="Mannhaupt G."/>
            <person name="Ebbole D.J."/>
            <person name="Freitag M."/>
            <person name="Paulsen I."/>
            <person name="Sachs M.S."/>
            <person name="Lander E.S."/>
            <person name="Nusbaum C."/>
            <person name="Birren B.W."/>
        </authorList>
    </citation>
    <scope>NUCLEOTIDE SEQUENCE [LARGE SCALE GENOMIC DNA]</scope>
    <source>
        <strain>ATCC 24698 / 74-OR23-1A / CBS 708.71 / DSM 1257 / FGSC 987</strain>
    </source>
</reference>
<reference key="3">
    <citation type="journal article" date="1993" name="Curr. Genet.">
        <title>Isolation, sequencing, and characterization of crp-5, a gene encoding a Neurospora ribosomal protein.</title>
        <authorList>
            <person name="Wang Z."/>
            <person name="Khaled A."/>
            <person name="Tarawneh K.A."/>
            <person name="Free S.J."/>
        </authorList>
    </citation>
    <scope>NUCLEOTIDE SEQUENCE [GENOMIC DNA] OF 1-72</scope>
</reference>
<reference key="4">
    <citation type="journal article" date="2021" name="Proc. Natl. Acad. Sci. U.S.A.">
        <title>Structure of the translating Neurospora ribosome arrested by cycloheximide.</title>
        <authorList>
            <person name="Shen L."/>
            <person name="Su Z."/>
            <person name="Yang K."/>
            <person name="Wu C."/>
            <person name="Becker T."/>
            <person name="Bell-Pedersen D."/>
            <person name="Zhang J."/>
            <person name="Sachs M.S."/>
        </authorList>
    </citation>
    <scope>STRUCTURE BY ELECTRON MICROSCOPY (2.70 ANGSTROMS)</scope>
</reference>
<feature type="chain" id="PRO_0000204524" description="Small ribosomal subunit protein eS26">
    <location>
        <begin position="1"/>
        <end position="119"/>
    </location>
</feature>
<feature type="region of interest" description="Disordered" evidence="1">
    <location>
        <begin position="1"/>
        <end position="20"/>
    </location>
</feature>
<feature type="region of interest" description="Disordered" evidence="1">
    <location>
        <begin position="88"/>
        <end position="119"/>
    </location>
</feature>
<feature type="sequence conflict" description="In Ref. 1; CAA39162." evidence="4" ref="1">
    <original>G</original>
    <variation>A</variation>
    <location>
        <position position="91"/>
    </location>
</feature>
<keyword id="KW-0002">3D-structure</keyword>
<keyword id="KW-0963">Cytoplasm</keyword>
<keyword id="KW-1185">Reference proteome</keyword>
<keyword id="KW-0687">Ribonucleoprotein</keyword>
<keyword id="KW-0689">Ribosomal protein</keyword>
<comment type="function">
    <text evidence="5">Component of the ribosome, a large ribonucleoprotein complex responsible for the synthesis of proteins in the cell. The small ribosomal subunit (SSU) binds messenger RNAs (mRNAs) and translates the encoded message by selecting cognate aminoacyl-transfer RNA (tRNA) molecules. The large subunit (LSU) contains the ribosomal catalytic site termed the peptidyl transferase center (PTC), which catalyzes the formation of peptide bonds, thereby polymerizing the amino acids delivered by tRNAs into a polypeptide chain. The nascent polypeptides leave the ribosome through a tunnel in the LSU and interact with protein factors that function in enzymatic processing, targeting, and the membrane insertion of nascent chains at the exit of the ribosomal tunnel.</text>
</comment>
<comment type="subunit">
    <text evidence="2">Component of the small ribosomal subunit (SSU). Mature N.crassa ribosomes consist of a small (40S) and a large (60S) subunit. The 40S small subunit contains 1 molecule of ribosomal RNA (18S rRNA) and at least 32 different proteins. The large 60S subunit contains 3 rRNA molecules (26S, 5.8S and 5S rRNA) and at least 42 different proteins.</text>
</comment>
<comment type="subcellular location">
    <subcellularLocation>
        <location evidence="2">Cytoplasm</location>
    </subcellularLocation>
</comment>
<comment type="similarity">
    <text evidence="4">Belongs to the eukaryotic ribosomal protein eS26 family.</text>
</comment>
<gene>
    <name type="primary">rps-26</name>
    <name type="synonym">crp-5</name>
    <name type="ORF">NCU04552</name>
</gene>
<dbReference type="EMBL" id="X55637">
    <property type="protein sequence ID" value="CAA39162.1"/>
    <property type="molecule type" value="mRNA"/>
</dbReference>
<dbReference type="EMBL" id="CM002242">
    <property type="protein sequence ID" value="EAA26707.1"/>
    <property type="molecule type" value="Genomic_DNA"/>
</dbReference>
<dbReference type="EMBL" id="M95597">
    <property type="protein sequence ID" value="AAA33580.1"/>
    <property type="molecule type" value="Genomic_DNA"/>
</dbReference>
<dbReference type="PIR" id="S13082">
    <property type="entry name" value="R4NC26"/>
</dbReference>
<dbReference type="RefSeq" id="XP_955943.1">
    <property type="nucleotide sequence ID" value="XM_950850.3"/>
</dbReference>
<dbReference type="PDB" id="7R81">
    <property type="method" value="EM"/>
    <property type="resolution" value="2.70 A"/>
    <property type="chains" value="b2=1-119"/>
</dbReference>
<dbReference type="PDBsum" id="7R81"/>
<dbReference type="EMDB" id="EMD-24307"/>
<dbReference type="SMR" id="P21772"/>
<dbReference type="FunCoup" id="P21772">
    <property type="interactions" value="727"/>
</dbReference>
<dbReference type="STRING" id="367110.P21772"/>
<dbReference type="PaxDb" id="5141-EFNCRP00000005356"/>
<dbReference type="EnsemblFungi" id="EAA26707">
    <property type="protein sequence ID" value="EAA26707"/>
    <property type="gene ID" value="NCU04552"/>
</dbReference>
<dbReference type="GeneID" id="3872091"/>
<dbReference type="KEGG" id="ncr:NCU04552"/>
<dbReference type="VEuPathDB" id="FungiDB:NCU04552"/>
<dbReference type="HOGENOM" id="CLU_129451_1_0_1"/>
<dbReference type="InParanoid" id="P21772"/>
<dbReference type="OMA" id="KCYCVSC"/>
<dbReference type="OrthoDB" id="10262653at2759"/>
<dbReference type="Proteomes" id="UP000001805">
    <property type="component" value="Chromosome 7, Linkage Group VII"/>
</dbReference>
<dbReference type="GO" id="GO:0022627">
    <property type="term" value="C:cytosolic small ribosomal subunit"/>
    <property type="evidence" value="ECO:0000318"/>
    <property type="project" value="GO_Central"/>
</dbReference>
<dbReference type="GO" id="GO:0003729">
    <property type="term" value="F:mRNA binding"/>
    <property type="evidence" value="ECO:0000318"/>
    <property type="project" value="GO_Central"/>
</dbReference>
<dbReference type="GO" id="GO:0003735">
    <property type="term" value="F:structural constituent of ribosome"/>
    <property type="evidence" value="ECO:0000318"/>
    <property type="project" value="GO_Central"/>
</dbReference>
<dbReference type="GO" id="GO:0006412">
    <property type="term" value="P:translation"/>
    <property type="evidence" value="ECO:0007669"/>
    <property type="project" value="InterPro"/>
</dbReference>
<dbReference type="FunFam" id="3.30.1740.20:FF:000001">
    <property type="entry name" value="40S ribosomal protein S26"/>
    <property type="match status" value="1"/>
</dbReference>
<dbReference type="Gene3D" id="3.30.1740.20">
    <property type="entry name" value="Ribosomal protein S26e"/>
    <property type="match status" value="1"/>
</dbReference>
<dbReference type="InterPro" id="IPR000892">
    <property type="entry name" value="Ribosomal_eS26"/>
</dbReference>
<dbReference type="InterPro" id="IPR047864">
    <property type="entry name" value="Ribosomal_eS26_CS"/>
</dbReference>
<dbReference type="InterPro" id="IPR038551">
    <property type="entry name" value="Ribosomal_eS26_sf"/>
</dbReference>
<dbReference type="PANTHER" id="PTHR12538">
    <property type="entry name" value="40S RIBOSOMAL PROTEIN S26"/>
    <property type="match status" value="1"/>
</dbReference>
<dbReference type="PANTHER" id="PTHR12538:SF0">
    <property type="entry name" value="40S RIBOSOMAL PROTEIN S26"/>
    <property type="match status" value="1"/>
</dbReference>
<dbReference type="Pfam" id="PF01283">
    <property type="entry name" value="Ribosomal_S26e"/>
    <property type="match status" value="1"/>
</dbReference>
<dbReference type="PROSITE" id="PS00733">
    <property type="entry name" value="RIBOSOMAL_S26E"/>
    <property type="match status" value="1"/>
</dbReference>
<organism>
    <name type="scientific">Neurospora crassa (strain ATCC 24698 / 74-OR23-1A / CBS 708.71 / DSM 1257 / FGSC 987)</name>
    <dbReference type="NCBI Taxonomy" id="367110"/>
    <lineage>
        <taxon>Eukaryota</taxon>
        <taxon>Fungi</taxon>
        <taxon>Dikarya</taxon>
        <taxon>Ascomycota</taxon>
        <taxon>Pezizomycotina</taxon>
        <taxon>Sordariomycetes</taxon>
        <taxon>Sordariomycetidae</taxon>
        <taxon>Sordariales</taxon>
        <taxon>Sordariaceae</taxon>
        <taxon>Neurospora</taxon>
    </lineage>
</organism>